<proteinExistence type="inferred from homology"/>
<gene>
    <name evidence="1" type="primary">rbfA</name>
    <name type="ordered locus">IL0967</name>
</gene>
<name>RBFA_IDILO</name>
<protein>
    <recommendedName>
        <fullName evidence="1">Ribosome-binding factor A</fullName>
    </recommendedName>
</protein>
<evidence type="ECO:0000255" key="1">
    <source>
        <dbReference type="HAMAP-Rule" id="MF_00003"/>
    </source>
</evidence>
<comment type="function">
    <text evidence="1">One of several proteins that assist in the late maturation steps of the functional core of the 30S ribosomal subunit. Associates with free 30S ribosomal subunits (but not with 30S subunits that are part of 70S ribosomes or polysomes). Required for efficient processing of 16S rRNA. May interact with the 5'-terminal helix region of 16S rRNA.</text>
</comment>
<comment type="subunit">
    <text evidence="1">Monomer. Binds 30S ribosomal subunits, but not 50S ribosomal subunits or 70S ribosomes.</text>
</comment>
<comment type="subcellular location">
    <subcellularLocation>
        <location evidence="1">Cytoplasm</location>
    </subcellularLocation>
</comment>
<comment type="similarity">
    <text evidence="1">Belongs to the RbfA family.</text>
</comment>
<organism>
    <name type="scientific">Idiomarina loihiensis (strain ATCC BAA-735 / DSM 15497 / L2-TR)</name>
    <dbReference type="NCBI Taxonomy" id="283942"/>
    <lineage>
        <taxon>Bacteria</taxon>
        <taxon>Pseudomonadati</taxon>
        <taxon>Pseudomonadota</taxon>
        <taxon>Gammaproteobacteria</taxon>
        <taxon>Alteromonadales</taxon>
        <taxon>Idiomarinaceae</taxon>
        <taxon>Idiomarina</taxon>
    </lineage>
</organism>
<dbReference type="EMBL" id="AE017340">
    <property type="protein sequence ID" value="AAV81807.1"/>
    <property type="molecule type" value="Genomic_DNA"/>
</dbReference>
<dbReference type="RefSeq" id="WP_011234218.1">
    <property type="nucleotide sequence ID" value="NC_006512.1"/>
</dbReference>
<dbReference type="SMR" id="Q5QTY9"/>
<dbReference type="STRING" id="283942.IL0967"/>
<dbReference type="GeneID" id="41336127"/>
<dbReference type="KEGG" id="ilo:IL0967"/>
<dbReference type="eggNOG" id="COG0858">
    <property type="taxonomic scope" value="Bacteria"/>
</dbReference>
<dbReference type="HOGENOM" id="CLU_089475_5_0_6"/>
<dbReference type="OrthoDB" id="307788at2"/>
<dbReference type="Proteomes" id="UP000001171">
    <property type="component" value="Chromosome"/>
</dbReference>
<dbReference type="GO" id="GO:0005829">
    <property type="term" value="C:cytosol"/>
    <property type="evidence" value="ECO:0007669"/>
    <property type="project" value="TreeGrafter"/>
</dbReference>
<dbReference type="GO" id="GO:0043024">
    <property type="term" value="F:ribosomal small subunit binding"/>
    <property type="evidence" value="ECO:0007669"/>
    <property type="project" value="TreeGrafter"/>
</dbReference>
<dbReference type="GO" id="GO:0030490">
    <property type="term" value="P:maturation of SSU-rRNA"/>
    <property type="evidence" value="ECO:0007669"/>
    <property type="project" value="UniProtKB-UniRule"/>
</dbReference>
<dbReference type="Gene3D" id="3.30.300.20">
    <property type="match status" value="1"/>
</dbReference>
<dbReference type="HAMAP" id="MF_00003">
    <property type="entry name" value="RbfA"/>
    <property type="match status" value="1"/>
</dbReference>
<dbReference type="InterPro" id="IPR015946">
    <property type="entry name" value="KH_dom-like_a/b"/>
</dbReference>
<dbReference type="InterPro" id="IPR000238">
    <property type="entry name" value="RbfA"/>
</dbReference>
<dbReference type="InterPro" id="IPR023799">
    <property type="entry name" value="RbfA_dom_sf"/>
</dbReference>
<dbReference type="NCBIfam" id="TIGR00082">
    <property type="entry name" value="rbfA"/>
    <property type="match status" value="1"/>
</dbReference>
<dbReference type="PANTHER" id="PTHR33515">
    <property type="entry name" value="RIBOSOME-BINDING FACTOR A, CHLOROPLASTIC-RELATED"/>
    <property type="match status" value="1"/>
</dbReference>
<dbReference type="PANTHER" id="PTHR33515:SF1">
    <property type="entry name" value="RIBOSOME-BINDING FACTOR A, CHLOROPLASTIC-RELATED"/>
    <property type="match status" value="1"/>
</dbReference>
<dbReference type="Pfam" id="PF02033">
    <property type="entry name" value="RBFA"/>
    <property type="match status" value="1"/>
</dbReference>
<dbReference type="SUPFAM" id="SSF89919">
    <property type="entry name" value="Ribosome-binding factor A, RbfA"/>
    <property type="match status" value="1"/>
</dbReference>
<accession>Q5QTY9</accession>
<keyword id="KW-0963">Cytoplasm</keyword>
<keyword id="KW-1185">Reference proteome</keyword>
<keyword id="KW-0690">Ribosome biogenesis</keyword>
<reference key="1">
    <citation type="journal article" date="2004" name="Proc. Natl. Acad. Sci. U.S.A.">
        <title>Genome sequence of the deep-sea gamma-proteobacterium Idiomarina loihiensis reveals amino acid fermentation as a source of carbon and energy.</title>
        <authorList>
            <person name="Hou S."/>
            <person name="Saw J.H."/>
            <person name="Lee K.S."/>
            <person name="Freitas T.A."/>
            <person name="Belisle C."/>
            <person name="Kawarabayasi Y."/>
            <person name="Donachie S.P."/>
            <person name="Pikina A."/>
            <person name="Galperin M.Y."/>
            <person name="Koonin E.V."/>
            <person name="Makarova K.S."/>
            <person name="Omelchenko M.V."/>
            <person name="Sorokin A."/>
            <person name="Wolf Y.I."/>
            <person name="Li Q.X."/>
            <person name="Keum Y.S."/>
            <person name="Campbell S."/>
            <person name="Denery J."/>
            <person name="Aizawa S."/>
            <person name="Shibata S."/>
            <person name="Malahoff A."/>
            <person name="Alam M."/>
        </authorList>
    </citation>
    <scope>NUCLEOTIDE SEQUENCE [LARGE SCALE GENOMIC DNA]</scope>
    <source>
        <strain>ATCC BAA-735 / DSM 15497 / L2-TR</strain>
    </source>
</reference>
<sequence length="128" mass="14732">MAQEFSRTERVRHQLQREIAMILQREIKDPRVSMVTVSDVEVSRDLAYAKVFVTFFQDDPEQTKQALKVLNEASGFIRSLLGKRIKARIVPQLRFQHDASLNEGIRMGKLVAEARERDKKSSENSGDD</sequence>
<feature type="chain" id="PRO_0000102674" description="Ribosome-binding factor A">
    <location>
        <begin position="1"/>
        <end position="128"/>
    </location>
</feature>